<sequence length="342" mass="39840">MMEMITIKPGKITVQANPNMPKEVAELFRKQHYEIVGRHSGVKLCHWLKKSLTEGRFCYKQKFYGIHSHRCLQMTPVLAWCTHNCIFCWRPMENFLGTELPQPWDDPAFIVEESIKAQRKLLIGYKGNPKVDKKKFEEAWNPTHAAISLSGEPMLYPYMGDLVEEFHKRGFTTFIVTNGTIPERLEEMIKEDKLPTQLYVSITAPDIETYNSVNIPMIPDGWERILRFLELMRDLPTRTVVRLTLVKGENMHSPEKYAKLILKARPMFVEAKAYMFVGYSRNRLTINNMPSHQDIREFAEALVKHLPGYHIEDEYEPSRVVLIMRDDVDPQGTGVEGRFIKH</sequence>
<comment type="function">
    <text evidence="1">Component of the wyosine derivatives biosynthesis pathway that catalyzes the condensation of N-methylguanine with 2 carbon atoms from pyruvate to form the tricyclic 4-demethylwyosine (imG-14) on guanosine-37 of tRNA(Phe).</text>
</comment>
<comment type="catalytic activity">
    <reaction evidence="1">
        <text>N(1)-methylguanosine(37) in tRNA(Phe) + pyruvate + S-adenosyl-L-methionine = 4-demethylwyosine(37) in tRNA(Phe) + 5'-deoxyadenosine + L-methionine + CO2 + H2O</text>
        <dbReference type="Rhea" id="RHEA:36347"/>
        <dbReference type="Rhea" id="RHEA-COMP:10164"/>
        <dbReference type="Rhea" id="RHEA-COMP:10165"/>
        <dbReference type="ChEBI" id="CHEBI:15361"/>
        <dbReference type="ChEBI" id="CHEBI:15377"/>
        <dbReference type="ChEBI" id="CHEBI:16526"/>
        <dbReference type="ChEBI" id="CHEBI:17319"/>
        <dbReference type="ChEBI" id="CHEBI:57844"/>
        <dbReference type="ChEBI" id="CHEBI:59789"/>
        <dbReference type="ChEBI" id="CHEBI:64315"/>
        <dbReference type="ChEBI" id="CHEBI:73542"/>
        <dbReference type="EC" id="4.1.3.44"/>
    </reaction>
</comment>
<comment type="cofactor">
    <cofactor evidence="5">
        <name>[2Fe-2S] cluster</name>
        <dbReference type="ChEBI" id="CHEBI:190135"/>
    </cofactor>
    <text evidence="5">Binds 1 [2Fe-2S] cluster.</text>
</comment>
<comment type="cofactor">
    <cofactor evidence="5">
        <name>[4Fe-4S] cluster</name>
        <dbReference type="ChEBI" id="CHEBI:49883"/>
    </cofactor>
    <text evidence="5">Binds 1 [4Fe-4S] cluster. The [4Fe-4S] cluster is coordinated with 3 cysteines and an exchangeable S-adenosyl-L-methionine.</text>
</comment>
<comment type="subunit">
    <text evidence="1 3">Monomer.</text>
</comment>
<comment type="subcellular location">
    <subcellularLocation>
        <location evidence="1">Cytoplasm</location>
    </subcellularLocation>
</comment>
<comment type="similarity">
    <text evidence="1">Belongs to the TYW1 family.</text>
</comment>
<feature type="chain" id="PRO_0000407857" description="S-adenosyl-L-methionine-dependent tRNA 4-demethylwyosine synthase">
    <location>
        <begin position="1"/>
        <end position="342"/>
    </location>
</feature>
<feature type="domain" description="Radical SAM core" evidence="2">
    <location>
        <begin position="64"/>
        <end position="312"/>
    </location>
</feature>
<feature type="binding site" evidence="4">
    <location>
        <position position="45"/>
    </location>
    <ligand>
        <name>[2Fe-2S] cluster</name>
        <dbReference type="ChEBI" id="CHEBI:190135"/>
    </ligand>
</feature>
<feature type="binding site" evidence="4">
    <location>
        <position position="58"/>
    </location>
    <ligand>
        <name>[2Fe-2S] cluster</name>
        <dbReference type="ChEBI" id="CHEBI:190135"/>
    </ligand>
</feature>
<feature type="binding site" evidence="4">
    <location>
        <position position="71"/>
    </location>
    <ligand>
        <name>[2Fe-2S] cluster</name>
        <dbReference type="ChEBI" id="CHEBI:190135"/>
    </ligand>
</feature>
<feature type="binding site" evidence="4">
    <location>
        <position position="81"/>
    </location>
    <ligand>
        <name>[4Fe-4S] cluster</name>
        <dbReference type="ChEBI" id="CHEBI:49883"/>
        <note>4Fe-4S-S-AdoMet</note>
    </ligand>
</feature>
<feature type="binding site" evidence="4">
    <location>
        <position position="85"/>
    </location>
    <ligand>
        <name>[4Fe-4S] cluster</name>
        <dbReference type="ChEBI" id="CHEBI:49883"/>
        <note>4Fe-4S-S-AdoMet</note>
    </ligand>
</feature>
<feature type="binding site" evidence="4">
    <location>
        <position position="88"/>
    </location>
    <ligand>
        <name>[4Fe-4S] cluster</name>
        <dbReference type="ChEBI" id="CHEBI:49883"/>
        <note>4Fe-4S-S-AdoMet</note>
    </ligand>
</feature>
<feature type="helix" evidence="6">
    <location>
        <begin position="22"/>
        <end position="30"/>
    </location>
</feature>
<feature type="strand" evidence="6">
    <location>
        <begin position="34"/>
        <end position="37"/>
    </location>
</feature>
<feature type="strand" evidence="6">
    <location>
        <begin position="40"/>
        <end position="42"/>
    </location>
</feature>
<feature type="helix" evidence="6">
    <location>
        <begin position="48"/>
        <end position="54"/>
    </location>
</feature>
<feature type="helix" evidence="6">
    <location>
        <begin position="59"/>
        <end position="64"/>
    </location>
</feature>
<feature type="helix" evidence="6">
    <location>
        <begin position="68"/>
        <end position="70"/>
    </location>
</feature>
<feature type="strand" evidence="6">
    <location>
        <begin position="71"/>
        <end position="76"/>
    </location>
</feature>
<feature type="strand" evidence="6">
    <location>
        <begin position="91"/>
        <end position="94"/>
    </location>
</feature>
<feature type="helix" evidence="6">
    <location>
        <begin position="107"/>
        <end position="122"/>
    </location>
</feature>
<feature type="helix" evidence="6">
    <location>
        <begin position="133"/>
        <end position="139"/>
    </location>
</feature>
<feature type="strand" evidence="6">
    <location>
        <begin position="144"/>
        <end position="147"/>
    </location>
</feature>
<feature type="strand" evidence="6">
    <location>
        <begin position="149"/>
        <end position="151"/>
    </location>
</feature>
<feature type="helix" evidence="6">
    <location>
        <begin position="153"/>
        <end position="155"/>
    </location>
</feature>
<feature type="helix" evidence="6">
    <location>
        <begin position="159"/>
        <end position="168"/>
    </location>
</feature>
<feature type="strand" evidence="6">
    <location>
        <begin position="172"/>
        <end position="177"/>
    </location>
</feature>
<feature type="helix" evidence="6">
    <location>
        <begin position="182"/>
        <end position="190"/>
    </location>
</feature>
<feature type="strand" evidence="6">
    <location>
        <begin position="196"/>
        <end position="202"/>
    </location>
</feature>
<feature type="helix" evidence="6">
    <location>
        <begin position="207"/>
        <end position="214"/>
    </location>
</feature>
<feature type="strand" evidence="6">
    <location>
        <begin position="216"/>
        <end position="219"/>
    </location>
</feature>
<feature type="helix" evidence="6">
    <location>
        <begin position="221"/>
        <end position="232"/>
    </location>
</feature>
<feature type="strand" evidence="6">
    <location>
        <begin position="236"/>
        <end position="245"/>
    </location>
</feature>
<feature type="turn" evidence="6">
    <location>
        <begin position="247"/>
        <end position="249"/>
    </location>
</feature>
<feature type="helix" evidence="6">
    <location>
        <begin position="254"/>
        <end position="264"/>
    </location>
</feature>
<feature type="strand" evidence="6">
    <location>
        <begin position="267"/>
        <end position="273"/>
    </location>
</feature>
<feature type="helix" evidence="6">
    <location>
        <begin position="286"/>
        <end position="288"/>
    </location>
</feature>
<feature type="helix" evidence="6">
    <location>
        <begin position="292"/>
        <end position="303"/>
    </location>
</feature>
<feature type="strand" evidence="6">
    <location>
        <begin position="309"/>
        <end position="315"/>
    </location>
</feature>
<feature type="helix" evidence="6">
    <location>
        <begin position="316"/>
        <end position="318"/>
    </location>
</feature>
<feature type="strand" evidence="6">
    <location>
        <begin position="320"/>
        <end position="325"/>
    </location>
</feature>
<feature type="strand" evidence="6">
    <location>
        <begin position="328"/>
        <end position="333"/>
    </location>
</feature>
<feature type="helix" evidence="6">
    <location>
        <begin position="334"/>
        <end position="336"/>
    </location>
</feature>
<feature type="strand" evidence="6">
    <location>
        <begin position="337"/>
        <end position="339"/>
    </location>
</feature>
<dbReference type="EC" id="4.1.3.44" evidence="1"/>
<dbReference type="EMBL" id="BA000001">
    <property type="protein sequence ID" value="BAA30819.1"/>
    <property type="molecule type" value="Genomic_DNA"/>
</dbReference>
<dbReference type="PIR" id="D71178">
    <property type="entry name" value="D71178"/>
</dbReference>
<dbReference type="PDB" id="2YX0">
    <property type="method" value="X-ray"/>
    <property type="resolution" value="2.21 A"/>
    <property type="chains" value="A=1-342"/>
</dbReference>
<dbReference type="PDBsum" id="2YX0"/>
<dbReference type="SMR" id="O59412"/>
<dbReference type="IntAct" id="O59412">
    <property type="interactions" value="1"/>
</dbReference>
<dbReference type="MINT" id="O59412"/>
<dbReference type="STRING" id="70601.gene:9378701"/>
<dbReference type="EnsemblBacteria" id="BAA30819">
    <property type="protein sequence ID" value="BAA30819"/>
    <property type="gene ID" value="BAA30819"/>
</dbReference>
<dbReference type="KEGG" id="pho:PH1705"/>
<dbReference type="eggNOG" id="arCOG04174">
    <property type="taxonomic scope" value="Archaea"/>
</dbReference>
<dbReference type="BioCyc" id="MetaCyc:MONOMER-18047"/>
<dbReference type="BRENDA" id="4.1.3.44">
    <property type="organism ID" value="5244"/>
</dbReference>
<dbReference type="EvolutionaryTrace" id="O59412"/>
<dbReference type="Proteomes" id="UP000000752">
    <property type="component" value="Chromosome"/>
</dbReference>
<dbReference type="GO" id="GO:0005737">
    <property type="term" value="C:cytoplasm"/>
    <property type="evidence" value="ECO:0007669"/>
    <property type="project" value="UniProtKB-SubCell"/>
</dbReference>
<dbReference type="GO" id="GO:0051537">
    <property type="term" value="F:2 iron, 2 sulfur cluster binding"/>
    <property type="evidence" value="ECO:0007669"/>
    <property type="project" value="UniProtKB-KW"/>
</dbReference>
<dbReference type="GO" id="GO:0051539">
    <property type="term" value="F:4 iron, 4 sulfur cluster binding"/>
    <property type="evidence" value="ECO:0007669"/>
    <property type="project" value="UniProtKB-UniRule"/>
</dbReference>
<dbReference type="GO" id="GO:0046872">
    <property type="term" value="F:metal ion binding"/>
    <property type="evidence" value="ECO:0007669"/>
    <property type="project" value="UniProtKB-KW"/>
</dbReference>
<dbReference type="GO" id="GO:0102521">
    <property type="term" value="F:tRNA-4-demethylwyosine synthase activity"/>
    <property type="evidence" value="ECO:0007669"/>
    <property type="project" value="UniProtKB-EC"/>
</dbReference>
<dbReference type="GO" id="GO:0008033">
    <property type="term" value="P:tRNA processing"/>
    <property type="evidence" value="ECO:0007669"/>
    <property type="project" value="UniProtKB-UniRule"/>
</dbReference>
<dbReference type="CDD" id="cd01335">
    <property type="entry name" value="Radical_SAM"/>
    <property type="match status" value="1"/>
</dbReference>
<dbReference type="Gene3D" id="3.20.20.70">
    <property type="entry name" value="Aldolase class I"/>
    <property type="match status" value="1"/>
</dbReference>
<dbReference type="HAMAP" id="MF_01921">
    <property type="entry name" value="TYW1_archaea"/>
    <property type="match status" value="1"/>
</dbReference>
<dbReference type="InterPro" id="IPR013785">
    <property type="entry name" value="Aldolase_TIM"/>
</dbReference>
<dbReference type="InterPro" id="IPR007197">
    <property type="entry name" value="rSAM"/>
</dbReference>
<dbReference type="InterPro" id="IPR013917">
    <property type="entry name" value="tRNA_wybutosine-synth"/>
</dbReference>
<dbReference type="InterPro" id="IPR034556">
    <property type="entry name" value="tRNA_wybutosine-synthase"/>
</dbReference>
<dbReference type="InterPro" id="IPR023993">
    <property type="entry name" value="TYW1_archaea"/>
</dbReference>
<dbReference type="NCBIfam" id="TIGR03972">
    <property type="entry name" value="rSAM_TYW1"/>
    <property type="match status" value="1"/>
</dbReference>
<dbReference type="PANTHER" id="PTHR13930">
    <property type="entry name" value="S-ADENOSYL-L-METHIONINE-DEPENDENT TRNA 4-DEMETHYLWYOSINE SYNTHASE"/>
    <property type="match status" value="1"/>
</dbReference>
<dbReference type="PANTHER" id="PTHR13930:SF0">
    <property type="entry name" value="S-ADENOSYL-L-METHIONINE-DEPENDENT TRNA 4-DEMETHYLWYOSINE SYNTHASE TYW1-RELATED"/>
    <property type="match status" value="1"/>
</dbReference>
<dbReference type="Pfam" id="PF04055">
    <property type="entry name" value="Radical_SAM"/>
    <property type="match status" value="1"/>
</dbReference>
<dbReference type="Pfam" id="PF08608">
    <property type="entry name" value="Wyosine_form"/>
    <property type="match status" value="1"/>
</dbReference>
<dbReference type="SFLD" id="SFLDS00029">
    <property type="entry name" value="Radical_SAM"/>
    <property type="match status" value="1"/>
</dbReference>
<dbReference type="SFLD" id="SFLDF00284">
    <property type="entry name" value="tRNA_wybutosine-synthesizing"/>
    <property type="match status" value="1"/>
</dbReference>
<dbReference type="SUPFAM" id="SSF102114">
    <property type="entry name" value="Radical SAM enzymes"/>
    <property type="match status" value="1"/>
</dbReference>
<dbReference type="PROSITE" id="PS51918">
    <property type="entry name" value="RADICAL_SAM"/>
    <property type="match status" value="1"/>
</dbReference>
<gene>
    <name evidence="1" type="primary">taw1</name>
    <name type="ordered locus">PH1705</name>
</gene>
<keyword id="KW-0001">2Fe-2S</keyword>
<keyword id="KW-0002">3D-structure</keyword>
<keyword id="KW-0004">4Fe-4S</keyword>
<keyword id="KW-0963">Cytoplasm</keyword>
<keyword id="KW-0408">Iron</keyword>
<keyword id="KW-0411">Iron-sulfur</keyword>
<keyword id="KW-0456">Lyase</keyword>
<keyword id="KW-0479">Metal-binding</keyword>
<keyword id="KW-0949">S-adenosyl-L-methionine</keyword>
<keyword id="KW-0819">tRNA processing</keyword>
<name>TYW1_PYRHO</name>
<proteinExistence type="evidence at protein level"/>
<accession>O59412</accession>
<organism>
    <name type="scientific">Pyrococcus horikoshii (strain ATCC 700860 / DSM 12428 / JCM 9974 / NBRC 100139 / OT-3)</name>
    <dbReference type="NCBI Taxonomy" id="70601"/>
    <lineage>
        <taxon>Archaea</taxon>
        <taxon>Methanobacteriati</taxon>
        <taxon>Methanobacteriota</taxon>
        <taxon>Thermococci</taxon>
        <taxon>Thermococcales</taxon>
        <taxon>Thermococcaceae</taxon>
        <taxon>Pyrococcus</taxon>
    </lineage>
</organism>
<evidence type="ECO:0000255" key="1">
    <source>
        <dbReference type="HAMAP-Rule" id="MF_01921"/>
    </source>
</evidence>
<evidence type="ECO:0000255" key="2">
    <source>
        <dbReference type="PROSITE-ProRule" id="PRU01266"/>
    </source>
</evidence>
<evidence type="ECO:0000269" key="3">
    <source>
    </source>
</evidence>
<evidence type="ECO:0000305" key="4"/>
<evidence type="ECO:0000305" key="5">
    <source>
    </source>
</evidence>
<evidence type="ECO:0007829" key="6">
    <source>
        <dbReference type="PDB" id="2YX0"/>
    </source>
</evidence>
<protein>
    <recommendedName>
        <fullName evidence="1">S-adenosyl-L-methionine-dependent tRNA 4-demethylwyosine synthase</fullName>
        <ecNumber evidence="1">4.1.3.44</ecNumber>
    </recommendedName>
    <alternativeName>
        <fullName evidence="1">tRNA wyosine derivatives biosynthesis protein Taw1</fullName>
    </alternativeName>
</protein>
<reference key="1">
    <citation type="journal article" date="1998" name="DNA Res.">
        <title>Complete sequence and gene organization of the genome of a hyper-thermophilic archaebacterium, Pyrococcus horikoshii OT3.</title>
        <authorList>
            <person name="Kawarabayasi Y."/>
            <person name="Sawada M."/>
            <person name="Horikawa H."/>
            <person name="Haikawa Y."/>
            <person name="Hino Y."/>
            <person name="Yamamoto S."/>
            <person name="Sekine M."/>
            <person name="Baba S."/>
            <person name="Kosugi H."/>
            <person name="Hosoyama A."/>
            <person name="Nagai Y."/>
            <person name="Sakai M."/>
            <person name="Ogura K."/>
            <person name="Otsuka R."/>
            <person name="Nakazawa H."/>
            <person name="Takamiya M."/>
            <person name="Ohfuku Y."/>
            <person name="Funahashi T."/>
            <person name="Tanaka T."/>
            <person name="Kudoh Y."/>
            <person name="Yamazaki J."/>
            <person name="Kushida N."/>
            <person name="Oguchi A."/>
            <person name="Aoki K."/>
            <person name="Yoshizawa T."/>
            <person name="Nakamura Y."/>
            <person name="Robb F.T."/>
            <person name="Horikoshi K."/>
            <person name="Masuchi Y."/>
            <person name="Shizuya H."/>
            <person name="Kikuchi H."/>
        </authorList>
    </citation>
    <scope>NUCLEOTIDE SEQUENCE [LARGE SCALE GENOMIC DNA]</scope>
    <source>
        <strain>ATCC 700860 / DSM 12428 / JCM 9974 / NBRC 100139 / OT-3</strain>
    </source>
</reference>
<reference key="2">
    <citation type="journal article" date="2010" name="Mol. Biol. Evol.">
        <title>Biosynthesis of wyosine derivatives in tRNA: an ancient and highly diverse pathway in Archaea.</title>
        <authorList>
            <person name="de Crecy-Lagard V."/>
            <person name="Brochier-Armanet C."/>
            <person name="Urbonavicius J."/>
            <person name="Fernandez B."/>
            <person name="Phillips G."/>
            <person name="Lyons B."/>
            <person name="Noma A."/>
            <person name="Alvarez S."/>
            <person name="Droogmans L."/>
            <person name="Armengaud J."/>
            <person name="Grosjean H."/>
        </authorList>
    </citation>
    <scope>GENE NAME</scope>
</reference>
<reference key="3">
    <citation type="journal article" date="2007" name="Acta Crystallogr. D">
        <title>Structure of an archaeal TYW1, the enzyme catalyzing the second step of wye-base biosynthesis.</title>
        <authorList>
            <person name="Goto-Ito S."/>
            <person name="Ishii R."/>
            <person name="Ito T."/>
            <person name="Shibata R."/>
            <person name="Fusatomi E."/>
            <person name="Sekine S.I."/>
            <person name="Bessho Y."/>
            <person name="Yokoyama S."/>
        </authorList>
    </citation>
    <scope>X-RAY CRYSTALLOGRAPHY (2.21 ANGSTROMS)</scope>
    <scope>COFACTOR</scope>
    <scope>SUBUNIT</scope>
</reference>